<keyword id="KW-0002">3D-structure</keyword>
<keyword id="KW-0150">Chloroplast</keyword>
<keyword id="KW-0903">Direct protein sequencing</keyword>
<keyword id="KW-0472">Membrane</keyword>
<keyword id="KW-0597">Phosphoprotein</keyword>
<keyword id="KW-0934">Plastid</keyword>
<keyword id="KW-1185">Reference proteome</keyword>
<keyword id="KW-0793">Thylakoid</keyword>
<keyword id="KW-0809">Transit peptide</keyword>
<feature type="transit peptide" description="Chloroplast" evidence="1">
    <location>
        <begin position="1"/>
        <end status="unknown"/>
    </location>
</feature>
<feature type="transit peptide" description="Thylakoid" evidence="3 4">
    <location>
        <begin status="unknown"/>
        <end position="68"/>
    </location>
</feature>
<feature type="chain" id="PRO_0000342099" description="Photosystem II repair protein PSB27-H1, chloroplastic">
    <location>
        <begin position="69"/>
        <end position="174"/>
    </location>
</feature>
<feature type="region of interest" description="Disordered" evidence="2">
    <location>
        <begin position="1"/>
        <end position="35"/>
    </location>
</feature>
<feature type="modified residue" description="Phosphothreonine" evidence="8">
    <location>
        <position position="94"/>
    </location>
</feature>
<feature type="modified residue" description="Phosphotyrosine" evidence="8">
    <location>
        <position position="132"/>
    </location>
</feature>
<feature type="helix" evidence="9">
    <location>
        <begin position="73"/>
        <end position="89"/>
    </location>
</feature>
<feature type="helix" evidence="9">
    <location>
        <begin position="98"/>
        <end position="116"/>
    </location>
</feature>
<feature type="helix" evidence="9">
    <location>
        <begin position="121"/>
        <end position="124"/>
    </location>
</feature>
<feature type="helix" evidence="9">
    <location>
        <begin position="126"/>
        <end position="144"/>
    </location>
</feature>
<feature type="helix" evidence="9">
    <location>
        <begin position="153"/>
        <end position="170"/>
    </location>
</feature>
<feature type="turn" evidence="9">
    <location>
        <begin position="171"/>
        <end position="173"/>
    </location>
</feature>
<comment type="function">
    <text evidence="5">Probably involved in repair of photodamaged photosystem II (PSII).</text>
</comment>
<comment type="subcellular location">
    <subcellularLocation>
        <location evidence="4 6">Plastid</location>
        <location evidence="4 6">Chloroplast thylakoid membrane</location>
        <topology evidence="4">Peripheral membrane protein</topology>
        <orientation evidence="4">Lumenal side</orientation>
    </subcellularLocation>
    <text>Associated with PSII on the lumenal side of the thylakoid membrane.</text>
</comment>
<comment type="disruption phenotype">
    <text evidence="5">Plants grow slightly slower and are slightly smaller than wild-type. Somewhat photoinhibited, in strong light the amount of D1 (psbA) protein decreased faster than wild-type and thus levels of PSII are decreased.</text>
</comment>
<comment type="similarity">
    <text evidence="7">Belongs to the Psb27 family.</text>
</comment>
<comment type="caution">
    <text evidence="7">Was also called At1g03610 (in AAM47889).</text>
</comment>
<comment type="sequence caution" evidence="7">
    <conflict type="frameshift">
        <sequence resource="EMBL-CDS" id="AAG40041"/>
    </conflict>
</comment>
<proteinExistence type="evidence at protein level"/>
<evidence type="ECO:0000255" key="1"/>
<evidence type="ECO:0000256" key="2">
    <source>
        <dbReference type="SAM" id="MobiDB-lite"/>
    </source>
</evidence>
<evidence type="ECO:0000269" key="3">
    <source>
    </source>
</evidence>
<evidence type="ECO:0000269" key="4">
    <source>
    </source>
</evidence>
<evidence type="ECO:0000269" key="5">
    <source>
    </source>
</evidence>
<evidence type="ECO:0000269" key="6">
    <source>
    </source>
</evidence>
<evidence type="ECO:0000305" key="7"/>
<evidence type="ECO:0007744" key="8">
    <source>
    </source>
</evidence>
<evidence type="ECO:0007829" key="9">
    <source>
        <dbReference type="PDB" id="5X56"/>
    </source>
</evidence>
<sequence length="174" mass="18835">MASASATATLLKPNLPPHKPTIIASSVSPPLPPPRRNHLLRRDFLSLAATSTLLTQSIQFLAPAPVSAAEDEEYIKDTSAVISKVRSTLSMQKTDPNVADAVAELREASNSWVAKYRKEKALLGKASFRDIYSALNAVSGHYVSFGPTAPIPAKRKARILEEMETAEKALTRGR</sequence>
<dbReference type="EMBL" id="AC002560">
    <property type="protein sequence ID" value="AAF86516.1"/>
    <property type="molecule type" value="Genomic_DNA"/>
</dbReference>
<dbReference type="EMBL" id="CP002684">
    <property type="protein sequence ID" value="AEE27588.1"/>
    <property type="molecule type" value="Genomic_DNA"/>
</dbReference>
<dbReference type="EMBL" id="AF370539">
    <property type="protein sequence ID" value="AAK48966.1"/>
    <property type="molecule type" value="mRNA"/>
</dbReference>
<dbReference type="EMBL" id="AY044332">
    <property type="protein sequence ID" value="AAK73273.1"/>
    <property type="molecule type" value="mRNA"/>
</dbReference>
<dbReference type="EMBL" id="AY114570">
    <property type="protein sequence ID" value="AAM47889.1"/>
    <property type="molecule type" value="mRNA"/>
</dbReference>
<dbReference type="EMBL" id="AF324690">
    <property type="protein sequence ID" value="AAG40041.1"/>
    <property type="status" value="ALT_FRAME"/>
    <property type="molecule type" value="mRNA"/>
</dbReference>
<dbReference type="EMBL" id="AY084551">
    <property type="protein sequence ID" value="AAM61118.1"/>
    <property type="molecule type" value="mRNA"/>
</dbReference>
<dbReference type="PIR" id="T00900">
    <property type="entry name" value="T00900"/>
</dbReference>
<dbReference type="RefSeq" id="NP_563687.1">
    <property type="nucleotide sequence ID" value="NM_100240.3"/>
</dbReference>
<dbReference type="PDB" id="5X56">
    <property type="method" value="X-ray"/>
    <property type="resolution" value="1.85 A"/>
    <property type="chains" value="A/B=69-174"/>
</dbReference>
<dbReference type="PDBsum" id="5X56"/>
<dbReference type="SMR" id="Q9LR64"/>
<dbReference type="BioGRID" id="24684">
    <property type="interactions" value="4"/>
</dbReference>
<dbReference type="FunCoup" id="Q9LR64">
    <property type="interactions" value="938"/>
</dbReference>
<dbReference type="IntAct" id="Q9LR64">
    <property type="interactions" value="3"/>
</dbReference>
<dbReference type="STRING" id="3702.Q9LR64"/>
<dbReference type="GlyGen" id="Q9LR64">
    <property type="glycosylation" value="1 site"/>
</dbReference>
<dbReference type="iPTMnet" id="Q9LR64"/>
<dbReference type="MetOSite" id="Q9LR64"/>
<dbReference type="PaxDb" id="3702-AT1G03600.1"/>
<dbReference type="ProteomicsDB" id="236438"/>
<dbReference type="EnsemblPlants" id="AT1G03600.1">
    <property type="protein sequence ID" value="AT1G03600.1"/>
    <property type="gene ID" value="AT1G03600"/>
</dbReference>
<dbReference type="GeneID" id="839449"/>
<dbReference type="Gramene" id="AT1G03600.1">
    <property type="protein sequence ID" value="AT1G03600.1"/>
    <property type="gene ID" value="AT1G03600"/>
</dbReference>
<dbReference type="KEGG" id="ath:AT1G03600"/>
<dbReference type="Araport" id="AT1G03600"/>
<dbReference type="TAIR" id="AT1G03600">
    <property type="gene designation" value="PSB27"/>
</dbReference>
<dbReference type="eggNOG" id="ENOG502RZI3">
    <property type="taxonomic scope" value="Eukaryota"/>
</dbReference>
<dbReference type="HOGENOM" id="CLU_112237_1_0_1"/>
<dbReference type="InParanoid" id="Q9LR64"/>
<dbReference type="OMA" id="GDYRQDT"/>
<dbReference type="PhylomeDB" id="Q9LR64"/>
<dbReference type="PRO" id="PR:Q9LR64"/>
<dbReference type="Proteomes" id="UP000006548">
    <property type="component" value="Chromosome 1"/>
</dbReference>
<dbReference type="ExpressionAtlas" id="Q9LR64">
    <property type="expression patterns" value="baseline and differential"/>
</dbReference>
<dbReference type="GO" id="GO:0009507">
    <property type="term" value="C:chloroplast"/>
    <property type="evidence" value="ECO:0007005"/>
    <property type="project" value="TAIR"/>
</dbReference>
<dbReference type="GO" id="GO:0009534">
    <property type="term" value="C:chloroplast thylakoid"/>
    <property type="evidence" value="ECO:0007005"/>
    <property type="project" value="TAIR"/>
</dbReference>
<dbReference type="GO" id="GO:0009543">
    <property type="term" value="C:chloroplast thylakoid lumen"/>
    <property type="evidence" value="ECO:0000314"/>
    <property type="project" value="TAIR"/>
</dbReference>
<dbReference type="GO" id="GO:0009535">
    <property type="term" value="C:chloroplast thylakoid membrane"/>
    <property type="evidence" value="ECO:0007005"/>
    <property type="project" value="TAIR"/>
</dbReference>
<dbReference type="GO" id="GO:0005576">
    <property type="term" value="C:extracellular region"/>
    <property type="evidence" value="ECO:0007005"/>
    <property type="project" value="TAIR"/>
</dbReference>
<dbReference type="GO" id="GO:0009523">
    <property type="term" value="C:photosystem II"/>
    <property type="evidence" value="ECO:0007669"/>
    <property type="project" value="InterPro"/>
</dbReference>
<dbReference type="GO" id="GO:0009579">
    <property type="term" value="C:thylakoid"/>
    <property type="evidence" value="ECO:0007005"/>
    <property type="project" value="TAIR"/>
</dbReference>
<dbReference type="GO" id="GO:0071484">
    <property type="term" value="P:cellular response to light intensity"/>
    <property type="evidence" value="ECO:0000315"/>
    <property type="project" value="TAIR"/>
</dbReference>
<dbReference type="GO" id="GO:0010207">
    <property type="term" value="P:photosystem II assembly"/>
    <property type="evidence" value="ECO:0007669"/>
    <property type="project" value="InterPro"/>
</dbReference>
<dbReference type="GO" id="GO:0010206">
    <property type="term" value="P:photosystem II repair"/>
    <property type="evidence" value="ECO:0000315"/>
    <property type="project" value="TAIR"/>
</dbReference>
<dbReference type="FunFam" id="1.20.58.810:FF:000001">
    <property type="entry name" value="Photosystem II lipoprotein Psb27"/>
    <property type="match status" value="1"/>
</dbReference>
<dbReference type="Gene3D" id="1.20.58.810">
    <property type="entry name" value="Photosystem II Pbs27"/>
    <property type="match status" value="1"/>
</dbReference>
<dbReference type="HAMAP" id="MF_01481">
    <property type="entry name" value="PSII_Psb27"/>
    <property type="match status" value="1"/>
</dbReference>
<dbReference type="InterPro" id="IPR025585">
    <property type="entry name" value="PSII_Psb27"/>
</dbReference>
<dbReference type="InterPro" id="IPR038450">
    <property type="entry name" value="PSII_Psb27_sf"/>
</dbReference>
<dbReference type="PANTHER" id="PTHR34041">
    <property type="entry name" value="PHOTOSYSTEM II REPAIR PROTEIN PSB27-H1, CHLOROPLASTIC"/>
    <property type="match status" value="1"/>
</dbReference>
<dbReference type="PANTHER" id="PTHR34041:SF1">
    <property type="entry name" value="PHOTOSYSTEM II REPAIR PROTEIN PSB27-H1, CHLOROPLASTIC"/>
    <property type="match status" value="1"/>
</dbReference>
<dbReference type="Pfam" id="PF13326">
    <property type="entry name" value="PSII_Pbs27"/>
    <property type="match status" value="1"/>
</dbReference>
<organism>
    <name type="scientific">Arabidopsis thaliana</name>
    <name type="common">Mouse-ear cress</name>
    <dbReference type="NCBI Taxonomy" id="3702"/>
    <lineage>
        <taxon>Eukaryota</taxon>
        <taxon>Viridiplantae</taxon>
        <taxon>Streptophyta</taxon>
        <taxon>Embryophyta</taxon>
        <taxon>Tracheophyta</taxon>
        <taxon>Spermatophyta</taxon>
        <taxon>Magnoliopsida</taxon>
        <taxon>eudicotyledons</taxon>
        <taxon>Gunneridae</taxon>
        <taxon>Pentapetalae</taxon>
        <taxon>rosids</taxon>
        <taxon>malvids</taxon>
        <taxon>Brassicales</taxon>
        <taxon>Brassicaceae</taxon>
        <taxon>Camelineae</taxon>
        <taxon>Arabidopsis</taxon>
    </lineage>
</organism>
<reference key="1">
    <citation type="journal article" date="2000" name="Nature">
        <title>Sequence and analysis of chromosome 1 of the plant Arabidopsis thaliana.</title>
        <authorList>
            <person name="Theologis A."/>
            <person name="Ecker J.R."/>
            <person name="Palm C.J."/>
            <person name="Federspiel N.A."/>
            <person name="Kaul S."/>
            <person name="White O."/>
            <person name="Alonso J."/>
            <person name="Altafi H."/>
            <person name="Araujo R."/>
            <person name="Bowman C.L."/>
            <person name="Brooks S.Y."/>
            <person name="Buehler E."/>
            <person name="Chan A."/>
            <person name="Chao Q."/>
            <person name="Chen H."/>
            <person name="Cheuk R.F."/>
            <person name="Chin C.W."/>
            <person name="Chung M.K."/>
            <person name="Conn L."/>
            <person name="Conway A.B."/>
            <person name="Conway A.R."/>
            <person name="Creasy T.H."/>
            <person name="Dewar K."/>
            <person name="Dunn P."/>
            <person name="Etgu P."/>
            <person name="Feldblyum T.V."/>
            <person name="Feng J.-D."/>
            <person name="Fong B."/>
            <person name="Fujii C.Y."/>
            <person name="Gill J.E."/>
            <person name="Goldsmith A.D."/>
            <person name="Haas B."/>
            <person name="Hansen N.F."/>
            <person name="Hughes B."/>
            <person name="Huizar L."/>
            <person name="Hunter J.L."/>
            <person name="Jenkins J."/>
            <person name="Johnson-Hopson C."/>
            <person name="Khan S."/>
            <person name="Khaykin E."/>
            <person name="Kim C.J."/>
            <person name="Koo H.L."/>
            <person name="Kremenetskaia I."/>
            <person name="Kurtz D.B."/>
            <person name="Kwan A."/>
            <person name="Lam B."/>
            <person name="Langin-Hooper S."/>
            <person name="Lee A."/>
            <person name="Lee J.M."/>
            <person name="Lenz C.A."/>
            <person name="Li J.H."/>
            <person name="Li Y.-P."/>
            <person name="Lin X."/>
            <person name="Liu S.X."/>
            <person name="Liu Z.A."/>
            <person name="Luros J.S."/>
            <person name="Maiti R."/>
            <person name="Marziali A."/>
            <person name="Militscher J."/>
            <person name="Miranda M."/>
            <person name="Nguyen M."/>
            <person name="Nierman W.C."/>
            <person name="Osborne B.I."/>
            <person name="Pai G."/>
            <person name="Peterson J."/>
            <person name="Pham P.K."/>
            <person name="Rizzo M."/>
            <person name="Rooney T."/>
            <person name="Rowley D."/>
            <person name="Sakano H."/>
            <person name="Salzberg S.L."/>
            <person name="Schwartz J.R."/>
            <person name="Shinn P."/>
            <person name="Southwick A.M."/>
            <person name="Sun H."/>
            <person name="Tallon L.J."/>
            <person name="Tambunga G."/>
            <person name="Toriumi M.J."/>
            <person name="Town C.D."/>
            <person name="Utterback T."/>
            <person name="Van Aken S."/>
            <person name="Vaysberg M."/>
            <person name="Vysotskaia V.S."/>
            <person name="Walker M."/>
            <person name="Wu D."/>
            <person name="Yu G."/>
            <person name="Fraser C.M."/>
            <person name="Venter J.C."/>
            <person name="Davis R.W."/>
        </authorList>
    </citation>
    <scope>NUCLEOTIDE SEQUENCE [LARGE SCALE GENOMIC DNA]</scope>
    <source>
        <strain>cv. Columbia</strain>
    </source>
</reference>
<reference key="2">
    <citation type="journal article" date="2017" name="Plant J.">
        <title>Araport11: a complete reannotation of the Arabidopsis thaliana reference genome.</title>
        <authorList>
            <person name="Cheng C.Y."/>
            <person name="Krishnakumar V."/>
            <person name="Chan A.P."/>
            <person name="Thibaud-Nissen F."/>
            <person name="Schobel S."/>
            <person name="Town C.D."/>
        </authorList>
    </citation>
    <scope>GENOME REANNOTATION</scope>
    <source>
        <strain>cv. Columbia</strain>
    </source>
</reference>
<reference key="3">
    <citation type="journal article" date="2003" name="Science">
        <title>Empirical analysis of transcriptional activity in the Arabidopsis genome.</title>
        <authorList>
            <person name="Yamada K."/>
            <person name="Lim J."/>
            <person name="Dale J.M."/>
            <person name="Chen H."/>
            <person name="Shinn P."/>
            <person name="Palm C.J."/>
            <person name="Southwick A.M."/>
            <person name="Wu H.C."/>
            <person name="Kim C.J."/>
            <person name="Nguyen M."/>
            <person name="Pham P.K."/>
            <person name="Cheuk R.F."/>
            <person name="Karlin-Newmann G."/>
            <person name="Liu S.X."/>
            <person name="Lam B."/>
            <person name="Sakano H."/>
            <person name="Wu T."/>
            <person name="Yu G."/>
            <person name="Miranda M."/>
            <person name="Quach H.L."/>
            <person name="Tripp M."/>
            <person name="Chang C.H."/>
            <person name="Lee J.M."/>
            <person name="Toriumi M.J."/>
            <person name="Chan M.M."/>
            <person name="Tang C.C."/>
            <person name="Onodera C.S."/>
            <person name="Deng J.M."/>
            <person name="Akiyama K."/>
            <person name="Ansari Y."/>
            <person name="Arakawa T."/>
            <person name="Banh J."/>
            <person name="Banno F."/>
            <person name="Bowser L."/>
            <person name="Brooks S.Y."/>
            <person name="Carninci P."/>
            <person name="Chao Q."/>
            <person name="Choy N."/>
            <person name="Enju A."/>
            <person name="Goldsmith A.D."/>
            <person name="Gurjal M."/>
            <person name="Hansen N.F."/>
            <person name="Hayashizaki Y."/>
            <person name="Johnson-Hopson C."/>
            <person name="Hsuan V.W."/>
            <person name="Iida K."/>
            <person name="Karnes M."/>
            <person name="Khan S."/>
            <person name="Koesema E."/>
            <person name="Ishida J."/>
            <person name="Jiang P.X."/>
            <person name="Jones T."/>
            <person name="Kawai J."/>
            <person name="Kamiya A."/>
            <person name="Meyers C."/>
            <person name="Nakajima M."/>
            <person name="Narusaka M."/>
            <person name="Seki M."/>
            <person name="Sakurai T."/>
            <person name="Satou M."/>
            <person name="Tamse R."/>
            <person name="Vaysberg M."/>
            <person name="Wallender E.K."/>
            <person name="Wong C."/>
            <person name="Yamamura Y."/>
            <person name="Yuan S."/>
            <person name="Shinozaki K."/>
            <person name="Davis R.W."/>
            <person name="Theologis A."/>
            <person name="Ecker J.R."/>
        </authorList>
    </citation>
    <scope>NUCLEOTIDE SEQUENCE [LARGE SCALE MRNA]</scope>
    <source>
        <strain>cv. Columbia</strain>
    </source>
</reference>
<reference key="4">
    <citation type="submission" date="2002-03" db="EMBL/GenBank/DDBJ databases">
        <title>Full-length cDNA from Arabidopsis thaliana.</title>
        <authorList>
            <person name="Brover V.V."/>
            <person name="Troukhan M.E."/>
            <person name="Alexandrov N.A."/>
            <person name="Lu Y.-P."/>
            <person name="Flavell R.B."/>
            <person name="Feldmann K.A."/>
        </authorList>
    </citation>
    <scope>NUCLEOTIDE SEQUENCE [LARGE SCALE MRNA]</scope>
</reference>
<reference key="5">
    <citation type="journal article" date="2002" name="Plant Cell">
        <title>Central functions of the lumenal and peripheral thylakoid proteome of Arabidopsis determined by experimentation and genome-wide prediction.</title>
        <authorList>
            <person name="Peltier J.-B."/>
            <person name="Emanuelsson O."/>
            <person name="Kalume D.E."/>
            <person name="Ytterberg J."/>
            <person name="Friso G."/>
            <person name="Rudella A."/>
            <person name="Liberles D.A."/>
            <person name="Soederberg L."/>
            <person name="Roepstorff P."/>
            <person name="von Heijne G."/>
            <person name="van Wijk K.J."/>
        </authorList>
    </citation>
    <scope>PROTEIN SEQUENCE OF N-TERMINUS</scope>
    <scope>IDENTIFICATION BY MASS SPECTROMETRY</scope>
</reference>
<reference key="6">
    <citation type="journal article" date="2003" name="Photosyn. Res.">
        <title>The proteome of the chloroplast lumen of higher plants.</title>
        <authorList>
            <person name="Kieselbach T."/>
            <person name="Schroeder W.P."/>
        </authorList>
    </citation>
    <scope>PROTEIN SEQUENCE OF 69-80</scope>
    <scope>SUBCELLULAR LOCATION</scope>
</reference>
<reference key="7">
    <citation type="journal article" date="2006" name="Plant Mol. Biol.">
        <title>A Psb27 homologue in Arabidopsis thaliana is required for efficient repair of photodamaged photosystem II.</title>
        <authorList>
            <person name="Chen H."/>
            <person name="Zhang D."/>
            <person name="Guo J."/>
            <person name="Wu H."/>
            <person name="Jin M."/>
            <person name="Lu Q."/>
            <person name="Lu C."/>
            <person name="Zhang L."/>
        </authorList>
    </citation>
    <scope>FUNCTION</scope>
    <scope>DISRUPTION PHENOTYPE</scope>
    <source>
        <strain>cv. Columbia</strain>
    </source>
</reference>
<reference key="8">
    <citation type="journal article" date="2008" name="PLoS ONE">
        <title>Sorting signals, N-terminal modifications and abundance of the chloroplast proteome.</title>
        <authorList>
            <person name="Zybailov B."/>
            <person name="Rutschow H."/>
            <person name="Friso G."/>
            <person name="Rudella A."/>
            <person name="Emanuelsson O."/>
            <person name="Sun Q."/>
            <person name="van Wijk K.J."/>
        </authorList>
    </citation>
    <scope>IDENTIFICATION BY MASS SPECTROMETRY</scope>
    <scope>SUBCELLULAR LOCATION [LARGE SCALE ANALYSIS]</scope>
</reference>
<reference key="9">
    <citation type="journal article" date="2012" name="J. Proteome Res.">
        <title>Identification of phosphoproteins in Arabidopsis thaliana leaves using polyethylene glycol fractionation, immobilized metal-ion affinity chromatography, two-dimensional gel electrophoresis and mass spectrometry.</title>
        <authorList>
            <person name="Aryal U.K."/>
            <person name="Krochko J.E."/>
            <person name="Ross A.R."/>
        </authorList>
    </citation>
    <scope>PHOSPHORYLATION [LARGE SCALE ANALYSIS] AT THR-94 AND TYR-132</scope>
    <scope>IDENTIFICATION BY MASS SPECTROMETRY [LARGE SCALE ANALYSIS]</scope>
</reference>
<gene>
    <name type="primary">PSB27-1</name>
    <name type="ordered locus">At1g03600</name>
    <name type="ORF">F21B7.14</name>
    <name type="ORF">F21B7.21</name>
    <name type="ORF">F21B7.22</name>
    <name type="ORF">F21B7_140</name>
</gene>
<accession>Q9LR64</accession>
<accession>Q9FPJ9</accession>
<protein>
    <recommendedName>
        <fullName>Photosystem II repair protein PSB27-H1, chloroplastic</fullName>
        <shortName>Psb27-H1</shortName>
    </recommendedName>
    <alternativeName>
        <fullName>Thylakoid lumenal protein PSB27-H1</fullName>
    </alternativeName>
</protein>
<name>PB27A_ARATH</name>